<sequence length="215" mass="23874">MAASQTIADSKRAFHQAFPHVIAPLYRRLADELLVELHLLSHQSRFEANELFSVGLCTVFDTFIKGYRPEAQTDALFRALCSSNGFDAAKLRKTYASLVEQAKGKDPESLKDWLSSHALKEGSHYSRLMAVGLMSLLKAAAADATDSDTEAIVKQSKELAEGLGLPTDRVEKDLTLFGSNSERMDQAVELVEETIAAEKRKKERRLEEQAQRTSS</sequence>
<proteinExistence type="inferred from homology"/>
<accession>Q3AJN7</accession>
<dbReference type="EMBL" id="CP000110">
    <property type="protein sequence ID" value="ABB35195.1"/>
    <property type="molecule type" value="Genomic_DNA"/>
</dbReference>
<dbReference type="RefSeq" id="WP_011364410.1">
    <property type="nucleotide sequence ID" value="NC_007516.1"/>
</dbReference>
<dbReference type="SMR" id="Q3AJN7"/>
<dbReference type="STRING" id="110662.Syncc9605_1441"/>
<dbReference type="KEGG" id="syd:Syncc9605_1441"/>
<dbReference type="eggNOG" id="ENOG502Z86M">
    <property type="taxonomic scope" value="Bacteria"/>
</dbReference>
<dbReference type="HOGENOM" id="CLU_079763_1_0_3"/>
<dbReference type="OrthoDB" id="463078at2"/>
<dbReference type="GO" id="GO:0030096">
    <property type="term" value="C:plasma membrane-derived thylakoid photosystem II"/>
    <property type="evidence" value="ECO:0007669"/>
    <property type="project" value="TreeGrafter"/>
</dbReference>
<dbReference type="GO" id="GO:0010207">
    <property type="term" value="P:photosystem II assembly"/>
    <property type="evidence" value="ECO:0007669"/>
    <property type="project" value="InterPro"/>
</dbReference>
<dbReference type="HAMAP" id="MF_01843">
    <property type="entry name" value="Thf1"/>
    <property type="match status" value="1"/>
</dbReference>
<dbReference type="InterPro" id="IPR017499">
    <property type="entry name" value="Thf1"/>
</dbReference>
<dbReference type="NCBIfam" id="TIGR03060">
    <property type="entry name" value="PS_II_psb29"/>
    <property type="match status" value="1"/>
</dbReference>
<dbReference type="PANTHER" id="PTHR34793">
    <property type="entry name" value="PROTEIN THYLAKOID FORMATION 1, CHLOROPLASTIC"/>
    <property type="match status" value="1"/>
</dbReference>
<dbReference type="PANTHER" id="PTHR34793:SF1">
    <property type="entry name" value="PROTEIN THYLAKOID FORMATION 1, CHLOROPLASTIC"/>
    <property type="match status" value="1"/>
</dbReference>
<dbReference type="Pfam" id="PF11264">
    <property type="entry name" value="ThylakoidFormat"/>
    <property type="match status" value="1"/>
</dbReference>
<name>THF1_SYNSC</name>
<gene>
    <name evidence="1" type="primary">thf1</name>
    <name type="ordered locus">Syncc9605_1441</name>
</gene>
<reference key="1">
    <citation type="submission" date="2005-07" db="EMBL/GenBank/DDBJ databases">
        <title>Complete sequence of Synechococcus sp. CC9605.</title>
        <authorList>
            <consortium name="US DOE Joint Genome Institute"/>
            <person name="Copeland A."/>
            <person name="Lucas S."/>
            <person name="Lapidus A."/>
            <person name="Barry K."/>
            <person name="Detter J.C."/>
            <person name="Glavina T."/>
            <person name="Hammon N."/>
            <person name="Israni S."/>
            <person name="Pitluck S."/>
            <person name="Schmutz J."/>
            <person name="Martinez M."/>
            <person name="Larimer F."/>
            <person name="Land M."/>
            <person name="Kyrpides N."/>
            <person name="Ivanova N."/>
            <person name="Richardson P."/>
        </authorList>
    </citation>
    <scope>NUCLEOTIDE SEQUENCE [LARGE SCALE GENOMIC DNA]</scope>
    <source>
        <strain>CC9605</strain>
    </source>
</reference>
<comment type="function">
    <text evidence="1">May be involved in photosynthetic membrane biogenesis.</text>
</comment>
<comment type="similarity">
    <text evidence="1">Belongs to the THF1 family.</text>
</comment>
<evidence type="ECO:0000255" key="1">
    <source>
        <dbReference type="HAMAP-Rule" id="MF_01843"/>
    </source>
</evidence>
<keyword id="KW-0175">Coiled coil</keyword>
<protein>
    <recommendedName>
        <fullName evidence="1">Protein Thf1</fullName>
    </recommendedName>
</protein>
<organism>
    <name type="scientific">Synechococcus sp. (strain CC9605)</name>
    <dbReference type="NCBI Taxonomy" id="110662"/>
    <lineage>
        <taxon>Bacteria</taxon>
        <taxon>Bacillati</taxon>
        <taxon>Cyanobacteriota</taxon>
        <taxon>Cyanophyceae</taxon>
        <taxon>Synechococcales</taxon>
        <taxon>Synechococcaceae</taxon>
        <taxon>Synechococcus</taxon>
    </lineage>
</organism>
<feature type="chain" id="PRO_0000235225" description="Protein Thf1">
    <location>
        <begin position="1"/>
        <end position="215"/>
    </location>
</feature>
<feature type="coiled-coil region" evidence="1">
    <location>
        <begin position="182"/>
        <end position="213"/>
    </location>
</feature>